<dbReference type="EC" id="3.1.3.16"/>
<dbReference type="EMBL" id="X56262">
    <property type="protein sequence ID" value="CAA39703.1"/>
    <property type="molecule type" value="Genomic_DNA"/>
</dbReference>
<dbReference type="EMBL" id="M60317">
    <property type="protein sequence ID" value="AAB04032.1"/>
    <property type="molecule type" value="Genomic_DNA"/>
</dbReference>
<dbReference type="EMBL" id="X58857">
    <property type="protein sequence ID" value="CAA41659.1"/>
    <property type="molecule type" value="Genomic_DNA"/>
</dbReference>
<dbReference type="EMBL" id="X83276">
    <property type="protein sequence ID" value="CAA58259.1"/>
    <property type="molecule type" value="Genomic_DNA"/>
</dbReference>
<dbReference type="EMBL" id="Z74236">
    <property type="protein sequence ID" value="CAA98765.1"/>
    <property type="molecule type" value="Genomic_DNA"/>
</dbReference>
<dbReference type="EMBL" id="BK006938">
    <property type="protein sequence ID" value="DAA11675.1"/>
    <property type="molecule type" value="Genomic_DNA"/>
</dbReference>
<dbReference type="PIR" id="B41525">
    <property type="entry name" value="PABY22"/>
</dbReference>
<dbReference type="RefSeq" id="NP_010093.1">
    <property type="nucleotide sequence ID" value="NM_001180248.1"/>
</dbReference>
<dbReference type="SMR" id="P23595"/>
<dbReference type="BioGRID" id="31857">
    <property type="interactions" value="180"/>
</dbReference>
<dbReference type="ComplexPortal" id="CPX-1382">
    <property type="entry name" value="TAP42-RRD2-PPH22 phosphatase complex"/>
</dbReference>
<dbReference type="ComplexPortal" id="CPX-1858">
    <property type="entry name" value="Serine/threonine-protein phosphatase PP2A variant 4"/>
</dbReference>
<dbReference type="ComplexPortal" id="CPX-1859">
    <property type="entry name" value="Serine/threonine-protein phosphatase PP2A variant 3"/>
</dbReference>
<dbReference type="DIP" id="DIP-2283N"/>
<dbReference type="FunCoup" id="P23595">
    <property type="interactions" value="1044"/>
</dbReference>
<dbReference type="IntAct" id="P23595">
    <property type="interactions" value="41"/>
</dbReference>
<dbReference type="MINT" id="P23595"/>
<dbReference type="STRING" id="4932.YDL188C"/>
<dbReference type="iPTMnet" id="P23595"/>
<dbReference type="PaxDb" id="4932-YDL188C"/>
<dbReference type="PeptideAtlas" id="P23595"/>
<dbReference type="EnsemblFungi" id="YDL188C_mRNA">
    <property type="protein sequence ID" value="YDL188C"/>
    <property type="gene ID" value="YDL188C"/>
</dbReference>
<dbReference type="GeneID" id="851339"/>
<dbReference type="KEGG" id="sce:YDL188C"/>
<dbReference type="AGR" id="SGD:S000002347"/>
<dbReference type="SGD" id="S000002347">
    <property type="gene designation" value="PPH22"/>
</dbReference>
<dbReference type="VEuPathDB" id="FungiDB:YDL188C"/>
<dbReference type="eggNOG" id="KOG0371">
    <property type="taxonomic scope" value="Eukaryota"/>
</dbReference>
<dbReference type="GeneTree" id="ENSGT00940000176641"/>
<dbReference type="HOGENOM" id="CLU_004962_8_1_1"/>
<dbReference type="InParanoid" id="P23595"/>
<dbReference type="OMA" id="CMKVRYP"/>
<dbReference type="OrthoDB" id="1930084at2759"/>
<dbReference type="BioCyc" id="YEAST:G3O-29573-MONOMER"/>
<dbReference type="BioGRID-ORCS" id="851339">
    <property type="hits" value="0 hits in 10 CRISPR screens"/>
</dbReference>
<dbReference type="PRO" id="PR:P23595"/>
<dbReference type="Proteomes" id="UP000002311">
    <property type="component" value="Chromosome IV"/>
</dbReference>
<dbReference type="RNAct" id="P23595">
    <property type="molecule type" value="protein"/>
</dbReference>
<dbReference type="GO" id="GO:0000781">
    <property type="term" value="C:chromosome, telomeric region"/>
    <property type="evidence" value="ECO:0000315"/>
    <property type="project" value="SGD"/>
</dbReference>
<dbReference type="GO" id="GO:0000779">
    <property type="term" value="C:condensed chromosome, centromeric region"/>
    <property type="evidence" value="ECO:0000314"/>
    <property type="project" value="SGD"/>
</dbReference>
<dbReference type="GO" id="GO:0005829">
    <property type="term" value="C:cytosol"/>
    <property type="evidence" value="ECO:0000318"/>
    <property type="project" value="GO_Central"/>
</dbReference>
<dbReference type="GO" id="GO:0034399">
    <property type="term" value="C:nuclear periphery"/>
    <property type="evidence" value="ECO:0000314"/>
    <property type="project" value="SGD"/>
</dbReference>
<dbReference type="GO" id="GO:0005634">
    <property type="term" value="C:nucleus"/>
    <property type="evidence" value="ECO:0000318"/>
    <property type="project" value="GO_Central"/>
</dbReference>
<dbReference type="GO" id="GO:0000159">
    <property type="term" value="C:protein phosphatase type 2A complex"/>
    <property type="evidence" value="ECO:0000353"/>
    <property type="project" value="ComplexPortal"/>
</dbReference>
<dbReference type="GO" id="GO:0046872">
    <property type="term" value="F:metal ion binding"/>
    <property type="evidence" value="ECO:0007669"/>
    <property type="project" value="UniProtKB-KW"/>
</dbReference>
<dbReference type="GO" id="GO:0004722">
    <property type="term" value="F:protein serine/threonine phosphatase activity"/>
    <property type="evidence" value="ECO:0000314"/>
    <property type="project" value="SGD"/>
</dbReference>
<dbReference type="GO" id="GO:0000082">
    <property type="term" value="P:G1/S transition of mitotic cell cycle"/>
    <property type="evidence" value="ECO:0000316"/>
    <property type="project" value="SGD"/>
</dbReference>
<dbReference type="GO" id="GO:0000086">
    <property type="term" value="P:G2/M transition of mitotic cell cycle"/>
    <property type="evidence" value="ECO:0000315"/>
    <property type="project" value="SGD"/>
</dbReference>
<dbReference type="GO" id="GO:0000278">
    <property type="term" value="P:mitotic cell cycle"/>
    <property type="evidence" value="ECO:0000318"/>
    <property type="project" value="GO_Central"/>
</dbReference>
<dbReference type="GO" id="GO:2000198">
    <property type="term" value="P:negative regulation of ribonucleoprotein complex localization"/>
    <property type="evidence" value="ECO:0000315"/>
    <property type="project" value="SGD"/>
</dbReference>
<dbReference type="GO" id="GO:2000786">
    <property type="term" value="P:positive regulation of autophagosome assembly"/>
    <property type="evidence" value="ECO:0000316"/>
    <property type="project" value="SGD"/>
</dbReference>
<dbReference type="GO" id="GO:1903432">
    <property type="term" value="P:regulation of TORC1 signaling"/>
    <property type="evidence" value="ECO:0000316"/>
    <property type="project" value="SGD"/>
</dbReference>
<dbReference type="GO" id="GO:0006417">
    <property type="term" value="P:regulation of translation"/>
    <property type="evidence" value="ECO:0000353"/>
    <property type="project" value="SGD"/>
</dbReference>
<dbReference type="GO" id="GO:0031929">
    <property type="term" value="P:TOR signaling"/>
    <property type="evidence" value="ECO:0000303"/>
    <property type="project" value="ComplexPortal"/>
</dbReference>
<dbReference type="CDD" id="cd07415">
    <property type="entry name" value="MPP_PP2A_PP4_PP6"/>
    <property type="match status" value="1"/>
</dbReference>
<dbReference type="FunFam" id="3.60.21.10:FF:000003">
    <property type="entry name" value="Serine/threonine-protein phosphatase"/>
    <property type="match status" value="1"/>
</dbReference>
<dbReference type="Gene3D" id="3.60.21.10">
    <property type="match status" value="1"/>
</dbReference>
<dbReference type="InterPro" id="IPR004843">
    <property type="entry name" value="Calcineurin-like_PHP_ApaH"/>
</dbReference>
<dbReference type="InterPro" id="IPR029052">
    <property type="entry name" value="Metallo-depent_PP-like"/>
</dbReference>
<dbReference type="InterPro" id="IPR047129">
    <property type="entry name" value="PPA2-like"/>
</dbReference>
<dbReference type="InterPro" id="IPR006186">
    <property type="entry name" value="Ser/Thr-sp_prot-phosphatase"/>
</dbReference>
<dbReference type="PANTHER" id="PTHR45619">
    <property type="entry name" value="SERINE/THREONINE-PROTEIN PHOSPHATASE PP2A-RELATED"/>
    <property type="match status" value="1"/>
</dbReference>
<dbReference type="Pfam" id="PF00149">
    <property type="entry name" value="Metallophos"/>
    <property type="match status" value="1"/>
</dbReference>
<dbReference type="PRINTS" id="PR00114">
    <property type="entry name" value="STPHPHTASE"/>
</dbReference>
<dbReference type="SMART" id="SM00156">
    <property type="entry name" value="PP2Ac"/>
    <property type="match status" value="1"/>
</dbReference>
<dbReference type="SUPFAM" id="SSF56300">
    <property type="entry name" value="Metallo-dependent phosphatases"/>
    <property type="match status" value="1"/>
</dbReference>
<dbReference type="PROSITE" id="PS00125">
    <property type="entry name" value="SER_THR_PHOSPHATASE"/>
    <property type="match status" value="1"/>
</dbReference>
<comment type="function">
    <text>Exact function not known, phosphatase 2A performs an essential cellular function.</text>
</comment>
<comment type="catalytic activity">
    <reaction>
        <text>O-phospho-L-seryl-[protein] + H2O = L-seryl-[protein] + phosphate</text>
        <dbReference type="Rhea" id="RHEA:20629"/>
        <dbReference type="Rhea" id="RHEA-COMP:9863"/>
        <dbReference type="Rhea" id="RHEA-COMP:11604"/>
        <dbReference type="ChEBI" id="CHEBI:15377"/>
        <dbReference type="ChEBI" id="CHEBI:29999"/>
        <dbReference type="ChEBI" id="CHEBI:43474"/>
        <dbReference type="ChEBI" id="CHEBI:83421"/>
        <dbReference type="EC" id="3.1.3.16"/>
    </reaction>
</comment>
<comment type="catalytic activity">
    <reaction>
        <text>O-phospho-L-threonyl-[protein] + H2O = L-threonyl-[protein] + phosphate</text>
        <dbReference type="Rhea" id="RHEA:47004"/>
        <dbReference type="Rhea" id="RHEA-COMP:11060"/>
        <dbReference type="Rhea" id="RHEA-COMP:11605"/>
        <dbReference type="ChEBI" id="CHEBI:15377"/>
        <dbReference type="ChEBI" id="CHEBI:30013"/>
        <dbReference type="ChEBI" id="CHEBI:43474"/>
        <dbReference type="ChEBI" id="CHEBI:61977"/>
        <dbReference type="EC" id="3.1.3.16"/>
    </reaction>
</comment>
<comment type="cofactor">
    <cofactor evidence="1">
        <name>Mn(2+)</name>
        <dbReference type="ChEBI" id="CHEBI:29035"/>
    </cofactor>
    <text evidence="1">Binds 2 manganese ions per subunit.</text>
</comment>
<comment type="subunit">
    <text evidence="5 7">Inactivated in a complex with phosphatase methylesterase PPE1 (PP2Ai). Interacts with phosphatase 2A activator RRD2, which can reactivate PP2Ai by dissociating the catalytic subunit from the complex. Interacts with TAP42.</text>
</comment>
<comment type="interaction">
    <interactant intactId="EBI-12752">
        <id>P23595</id>
    </interactant>
    <interactant intactId="EBI-8394">
        <id>P38074</id>
        <label>HMT1</label>
    </interactant>
    <organismsDiffer>false</organismsDiffer>
    <experiments>3</experiments>
</comment>
<comment type="interaction">
    <interactant intactId="EBI-12752">
        <id>P23595</id>
    </interactant>
    <interactant intactId="EBI-18926">
        <id>Q04372</id>
        <label>TAP42</label>
    </interactant>
    <organismsDiffer>false</organismsDiffer>
    <experiments>6</experiments>
</comment>
<comment type="interaction">
    <interactant intactId="EBI-12752">
        <id>P23595</id>
    </interactant>
    <interactant intactId="EBI-38123">
        <id>Q12199</id>
        <label>TIP41</label>
    </interactant>
    <organismsDiffer>false</organismsDiffer>
    <experiments>3</experiments>
</comment>
<comment type="PTM">
    <text evidence="3 4">Reversibly methyl esterified on Leu-377 by leucine carboxyl methyltransferase 1 (PPM1) and protein phosphatase methylesterase 1 (PPE1). Carboxyl methylation influences the affinity of the catalytic subunit for the different regulatory subunits, thereby modulating the PP2A holoenzyme's substrate specificity, enzyme activity and cellular localization.</text>
</comment>
<comment type="miscellaneous">
    <text evidence="6">Present with 4110 molecules/cell in log phase SD medium.</text>
</comment>
<comment type="similarity">
    <text evidence="8">Belongs to the PPP phosphatase family. PP-2A subfamily.</text>
</comment>
<accession>P23595</accession>
<accession>D6VRG5</accession>
<organism>
    <name type="scientific">Saccharomyces cerevisiae (strain ATCC 204508 / S288c)</name>
    <name type="common">Baker's yeast</name>
    <dbReference type="NCBI Taxonomy" id="559292"/>
    <lineage>
        <taxon>Eukaryota</taxon>
        <taxon>Fungi</taxon>
        <taxon>Dikarya</taxon>
        <taxon>Ascomycota</taxon>
        <taxon>Saccharomycotina</taxon>
        <taxon>Saccharomycetes</taxon>
        <taxon>Saccharomycetales</taxon>
        <taxon>Saccharomycetaceae</taxon>
        <taxon>Saccharomyces</taxon>
    </lineage>
</organism>
<name>PP2A2_YEAST</name>
<feature type="chain" id="PRO_0000058874" description="Serine/threonine-protein phosphatase PP2A-2 catalytic subunit">
    <location>
        <begin position="1"/>
        <end position="377"/>
    </location>
</feature>
<feature type="region of interest" description="Disordered" evidence="2">
    <location>
        <begin position="1"/>
        <end position="66"/>
    </location>
</feature>
<feature type="compositionally biased region" description="Basic and acidic residues" evidence="2">
    <location>
        <begin position="28"/>
        <end position="40"/>
    </location>
</feature>
<feature type="active site" description="Proton donor" evidence="1">
    <location>
        <position position="186"/>
    </location>
</feature>
<feature type="binding site" evidence="1">
    <location>
        <position position="125"/>
    </location>
    <ligand>
        <name>Mn(2+)</name>
        <dbReference type="ChEBI" id="CHEBI:29035"/>
        <label>1</label>
    </ligand>
</feature>
<feature type="binding site" evidence="1">
    <location>
        <position position="127"/>
    </location>
    <ligand>
        <name>Mn(2+)</name>
        <dbReference type="ChEBI" id="CHEBI:29035"/>
        <label>1</label>
    </ligand>
</feature>
<feature type="binding site" evidence="1">
    <location>
        <position position="153"/>
    </location>
    <ligand>
        <name>Mn(2+)</name>
        <dbReference type="ChEBI" id="CHEBI:29035"/>
        <label>1</label>
    </ligand>
</feature>
<feature type="binding site" evidence="1">
    <location>
        <position position="153"/>
    </location>
    <ligand>
        <name>Mn(2+)</name>
        <dbReference type="ChEBI" id="CHEBI:29035"/>
        <label>2</label>
    </ligand>
</feature>
<feature type="binding site" evidence="1">
    <location>
        <position position="185"/>
    </location>
    <ligand>
        <name>Mn(2+)</name>
        <dbReference type="ChEBI" id="CHEBI:29035"/>
        <label>2</label>
    </ligand>
</feature>
<feature type="binding site" evidence="1">
    <location>
        <position position="235"/>
    </location>
    <ligand>
        <name>Mn(2+)</name>
        <dbReference type="ChEBI" id="CHEBI:29035"/>
        <label>2</label>
    </ligand>
</feature>
<feature type="binding site" evidence="1">
    <location>
        <position position="309"/>
    </location>
    <ligand>
        <name>Mn(2+)</name>
        <dbReference type="ChEBI" id="CHEBI:29035"/>
        <label>2</label>
    </ligand>
</feature>
<feature type="modified residue" description="Phosphoserine" evidence="11">
    <location>
        <position position="38"/>
    </location>
</feature>
<feature type="modified residue" description="Phosphothreonine" evidence="9 10 11">
    <location>
        <position position="43"/>
    </location>
</feature>
<feature type="modified residue" description="Leucine methyl ester" evidence="3 4">
    <location>
        <position position="377"/>
    </location>
</feature>
<sequence>MDMEIDDPMHGSDEDQLSPTLDEDMNSDDGKNNTKARSNDEDTDEELEDFNFKPGSSGIADHKSSKPLKLTNTNINQLDQWIEHLSKCEPLSEDDVARLCKMAVDVLQFEENVKPINVPVTICGDVHGQFHDLLELFKIGGPCPDTNYLFMGDYVDRGYYSVETVSYLVAMKVRYPHRITILRGNHESRQITQVYGFYDECLRKYGSANVWKMFTDLFDYFPVTALVDNKIFCLHGGLSPMIETIDQVRDLNRIQEVPHEGPMCDLLWSDPDDRGGWGISPRGAGFTFGQDISEQFNHTNDLSLIARAHQLVMEGYSWSHQQNVVTIFSAPNYCYRCGNQAAIMEVDENHNRQFLQYDPSVRPGEPTVTRKTPDYFL</sequence>
<gene>
    <name type="primary">PPH22</name>
    <name type="synonym">SIS4</name>
    <name type="ordered locus">YDL188C</name>
    <name type="ORF">D1271</name>
</gene>
<evidence type="ECO:0000250" key="1"/>
<evidence type="ECO:0000256" key="2">
    <source>
        <dbReference type="SAM" id="MobiDB-lite"/>
    </source>
</evidence>
<evidence type="ECO:0000269" key="3">
    <source>
    </source>
</evidence>
<evidence type="ECO:0000269" key="4">
    <source>
    </source>
</evidence>
<evidence type="ECO:0000269" key="5">
    <source>
    </source>
</evidence>
<evidence type="ECO:0000269" key="6">
    <source>
    </source>
</evidence>
<evidence type="ECO:0000269" key="7">
    <source>
    </source>
</evidence>
<evidence type="ECO:0000305" key="8"/>
<evidence type="ECO:0007744" key="9">
    <source>
    </source>
</evidence>
<evidence type="ECO:0007744" key="10">
    <source>
    </source>
</evidence>
<evidence type="ECO:0007744" key="11">
    <source>
    </source>
</evidence>
<proteinExistence type="evidence at protein level"/>
<protein>
    <recommendedName>
        <fullName>Serine/threonine-protein phosphatase PP2A-2 catalytic subunit</fullName>
        <ecNumber>3.1.3.16</ecNumber>
    </recommendedName>
</protein>
<reference key="1">
    <citation type="journal article" date="1990" name="EMBO J.">
        <title>Saccharomyces cerevisiae protein phosphatase 2A performs an essential cellular function and is encoded by two genes.</title>
        <authorList>
            <person name="Sneddon A.A."/>
            <person name="Cohen P.T.W."/>
            <person name="Stark M.J.R."/>
        </authorList>
    </citation>
    <scope>NUCLEOTIDE SEQUENCE [GENOMIC DNA]</scope>
    <source>
        <strain>LL20</strain>
    </source>
</reference>
<reference key="2">
    <citation type="journal article" date="1991" name="Mol. Cell. Biol.">
        <title>The SIT4 protein phosphatase functions in late G1 for progression into S phase.</title>
        <authorList>
            <person name="Sutton A."/>
            <person name="Immanuel D."/>
            <person name="Arndt K.T."/>
        </authorList>
    </citation>
    <scope>NUCLEOTIDE SEQUENCE [GENOMIC DNA]</scope>
</reference>
<reference key="3">
    <citation type="journal article" date="1991" name="Mol. Cell. Biol.">
        <title>Protein phosphatase 2A in Saccharomyces cerevisiae: effects on cell growth and bud morphogenesis.</title>
        <authorList>
            <person name="Ronne H."/>
            <person name="Carlberg M."/>
            <person name="Hu G.-Z."/>
            <person name="Nehlin J.O."/>
        </authorList>
    </citation>
    <scope>NUCLEOTIDE SEQUENCE [GENOMIC DNA]</scope>
    <source>
        <strain>ATCC 208353 / W303-1A</strain>
    </source>
</reference>
<reference key="4">
    <citation type="journal article" date="1995" name="Yeast">
        <title>New open reading frames, one of which is similar to the nifV gene of Azotobacter vinelandii, found on a 12.5 kbp fragment of chromosome IV of Saccharomyces cerevisiae.</title>
        <authorList>
            <person name="Verhasselt P."/>
            <person name="Voet M."/>
            <person name="Volckaert G."/>
        </authorList>
    </citation>
    <scope>NUCLEOTIDE SEQUENCE [GENOMIC DNA]</scope>
    <source>
        <strain>ATCC 96604 / S288c / FY1679</strain>
    </source>
</reference>
<reference key="5">
    <citation type="journal article" date="1997" name="Nature">
        <title>The nucleotide sequence of Saccharomyces cerevisiae chromosome IV.</title>
        <authorList>
            <person name="Jacq C."/>
            <person name="Alt-Moerbe J."/>
            <person name="Andre B."/>
            <person name="Arnold W."/>
            <person name="Bahr A."/>
            <person name="Ballesta J.P.G."/>
            <person name="Bargues M."/>
            <person name="Baron L."/>
            <person name="Becker A."/>
            <person name="Biteau N."/>
            <person name="Bloecker H."/>
            <person name="Blugeon C."/>
            <person name="Boskovic J."/>
            <person name="Brandt P."/>
            <person name="Brueckner M."/>
            <person name="Buitrago M.J."/>
            <person name="Coster F."/>
            <person name="Delaveau T."/>
            <person name="del Rey F."/>
            <person name="Dujon B."/>
            <person name="Eide L.G."/>
            <person name="Garcia-Cantalejo J.M."/>
            <person name="Goffeau A."/>
            <person name="Gomez-Peris A."/>
            <person name="Granotier C."/>
            <person name="Hanemann V."/>
            <person name="Hankeln T."/>
            <person name="Hoheisel J.D."/>
            <person name="Jaeger W."/>
            <person name="Jimenez A."/>
            <person name="Jonniaux J.-L."/>
            <person name="Kraemer C."/>
            <person name="Kuester H."/>
            <person name="Laamanen P."/>
            <person name="Legros Y."/>
            <person name="Louis E.J."/>
            <person name="Moeller-Rieker S."/>
            <person name="Monnet A."/>
            <person name="Moro M."/>
            <person name="Mueller-Auer S."/>
            <person name="Nussbaumer B."/>
            <person name="Paricio N."/>
            <person name="Paulin L."/>
            <person name="Perea J."/>
            <person name="Perez-Alonso M."/>
            <person name="Perez-Ortin J.E."/>
            <person name="Pohl T.M."/>
            <person name="Prydz H."/>
            <person name="Purnelle B."/>
            <person name="Rasmussen S.W."/>
            <person name="Remacha M.A."/>
            <person name="Revuelta J.L."/>
            <person name="Rieger M."/>
            <person name="Salom D."/>
            <person name="Saluz H.P."/>
            <person name="Saiz J.E."/>
            <person name="Saren A.-M."/>
            <person name="Schaefer M."/>
            <person name="Scharfe M."/>
            <person name="Schmidt E.R."/>
            <person name="Schneider C."/>
            <person name="Scholler P."/>
            <person name="Schwarz S."/>
            <person name="Soler-Mira A."/>
            <person name="Urrestarazu L.A."/>
            <person name="Verhasselt P."/>
            <person name="Vissers S."/>
            <person name="Voet M."/>
            <person name="Volckaert G."/>
            <person name="Wagner G."/>
            <person name="Wambutt R."/>
            <person name="Wedler E."/>
            <person name="Wedler H."/>
            <person name="Woelfl S."/>
            <person name="Harris D.E."/>
            <person name="Bowman S."/>
            <person name="Brown D."/>
            <person name="Churcher C.M."/>
            <person name="Connor R."/>
            <person name="Dedman K."/>
            <person name="Gentles S."/>
            <person name="Hamlin N."/>
            <person name="Hunt S."/>
            <person name="Jones L."/>
            <person name="McDonald S."/>
            <person name="Murphy L.D."/>
            <person name="Niblett D."/>
            <person name="Odell C."/>
            <person name="Oliver K."/>
            <person name="Rajandream M.A."/>
            <person name="Richards C."/>
            <person name="Shore L."/>
            <person name="Walsh S.V."/>
            <person name="Barrell B.G."/>
            <person name="Dietrich F.S."/>
            <person name="Mulligan J.T."/>
            <person name="Allen E."/>
            <person name="Araujo R."/>
            <person name="Aviles E."/>
            <person name="Berno A."/>
            <person name="Carpenter J."/>
            <person name="Chen E."/>
            <person name="Cherry J.M."/>
            <person name="Chung E."/>
            <person name="Duncan M."/>
            <person name="Hunicke-Smith S."/>
            <person name="Hyman R.W."/>
            <person name="Komp C."/>
            <person name="Lashkari D."/>
            <person name="Lew H."/>
            <person name="Lin D."/>
            <person name="Mosedale D."/>
            <person name="Nakahara K."/>
            <person name="Namath A."/>
            <person name="Oefner P."/>
            <person name="Oh C."/>
            <person name="Petel F.X."/>
            <person name="Roberts D."/>
            <person name="Schramm S."/>
            <person name="Schroeder M."/>
            <person name="Shogren T."/>
            <person name="Shroff N."/>
            <person name="Winant A."/>
            <person name="Yelton M.A."/>
            <person name="Botstein D."/>
            <person name="Davis R.W."/>
            <person name="Johnston M."/>
            <person name="Andrews S."/>
            <person name="Brinkman R."/>
            <person name="Cooper J."/>
            <person name="Ding H."/>
            <person name="Du Z."/>
            <person name="Favello A."/>
            <person name="Fulton L."/>
            <person name="Gattung S."/>
            <person name="Greco T."/>
            <person name="Hallsworth K."/>
            <person name="Hawkins J."/>
            <person name="Hillier L.W."/>
            <person name="Jier M."/>
            <person name="Johnson D."/>
            <person name="Johnston L."/>
            <person name="Kirsten J."/>
            <person name="Kucaba T."/>
            <person name="Langston Y."/>
            <person name="Latreille P."/>
            <person name="Le T."/>
            <person name="Mardis E."/>
            <person name="Menezes S."/>
            <person name="Miller N."/>
            <person name="Nhan M."/>
            <person name="Pauley A."/>
            <person name="Peluso D."/>
            <person name="Rifkin L."/>
            <person name="Riles L."/>
            <person name="Taich A."/>
            <person name="Trevaskis E."/>
            <person name="Vignati D."/>
            <person name="Wilcox L."/>
            <person name="Wohldman P."/>
            <person name="Vaudin M."/>
            <person name="Wilson R."/>
            <person name="Waterston R."/>
            <person name="Albermann K."/>
            <person name="Hani J."/>
            <person name="Heumann K."/>
            <person name="Kleine K."/>
            <person name="Mewes H.-W."/>
            <person name="Zollner A."/>
            <person name="Zaccaria P."/>
        </authorList>
    </citation>
    <scope>NUCLEOTIDE SEQUENCE [LARGE SCALE GENOMIC DNA]</scope>
    <source>
        <strain>ATCC 204508 / S288c</strain>
    </source>
</reference>
<reference key="6">
    <citation type="journal article" date="2014" name="G3 (Bethesda)">
        <title>The reference genome sequence of Saccharomyces cerevisiae: Then and now.</title>
        <authorList>
            <person name="Engel S.R."/>
            <person name="Dietrich F.S."/>
            <person name="Fisk D.G."/>
            <person name="Binkley G."/>
            <person name="Balakrishnan R."/>
            <person name="Costanzo M.C."/>
            <person name="Dwight S.S."/>
            <person name="Hitz B.C."/>
            <person name="Karra K."/>
            <person name="Nash R.S."/>
            <person name="Weng S."/>
            <person name="Wong E.D."/>
            <person name="Lloyd P."/>
            <person name="Skrzypek M.S."/>
            <person name="Miyasato S.R."/>
            <person name="Simison M."/>
            <person name="Cherry J.M."/>
        </authorList>
    </citation>
    <scope>GENOME REANNOTATION</scope>
    <source>
        <strain>ATCC 204508 / S288c</strain>
    </source>
</reference>
<reference key="7">
    <citation type="journal article" date="2000" name="EMBO J.">
        <title>Carboxyl methylation of the phosphoprotein phosphatase 2A catalytic subunit promotes its functional association with regulatory subunits in vivo.</title>
        <authorList>
            <person name="Wu J."/>
            <person name="Tolstykh T."/>
            <person name="Lee J."/>
            <person name="Boyd K."/>
            <person name="Stock J.B."/>
            <person name="Broach J.R."/>
        </authorList>
    </citation>
    <scope>METHYLATION AT LEU-377 BY PPM1</scope>
    <scope>DEMETHYLATION BY PPE1</scope>
</reference>
<reference key="8">
    <citation type="journal article" date="2001" name="Arch. Biochem. Biophys.">
        <title>Protein phosphatase methyltransferase 1 (Ppm1p) is the sole activity responsible for modification of the major forms of protein phosphatase 2A in yeast.</title>
        <authorList>
            <person name="Kalhor H.R."/>
            <person name="Luk K."/>
            <person name="Ramos A."/>
            <person name="Zobel-Thropp P."/>
            <person name="Clarke S."/>
        </authorList>
    </citation>
    <scope>METHYLATION AT LEU-377 BY PPM1</scope>
</reference>
<reference key="9">
    <citation type="journal article" date="2003" name="Mol. Biol. Cell">
        <title>Interaction with Tap42 is required for the essential function of Sit4 and type 2A phosphatases.</title>
        <authorList>
            <person name="Wang H."/>
            <person name="Wang X."/>
            <person name="Jiang Y."/>
        </authorList>
    </citation>
    <scope>INTERACTION WITH TAP42</scope>
</reference>
<reference key="10">
    <citation type="journal article" date="2003" name="Nature">
        <title>Global analysis of protein expression in yeast.</title>
        <authorList>
            <person name="Ghaemmaghami S."/>
            <person name="Huh W.-K."/>
            <person name="Bower K."/>
            <person name="Howson R.W."/>
            <person name="Belle A."/>
            <person name="Dephoure N."/>
            <person name="O'Shea E.K."/>
            <person name="Weissman J.S."/>
        </authorList>
    </citation>
    <scope>LEVEL OF PROTEIN EXPRESSION [LARGE SCALE ANALYSIS]</scope>
</reference>
<reference key="11">
    <citation type="journal article" date="2005" name="Biochem. J.">
        <title>Specific interactions of PP2A and PP2A-like phosphatases with the yeast PTPA homologues, Ypa1 and Ypa2.</title>
        <authorList>
            <person name="Van Hoof C."/>
            <person name="Martens E."/>
            <person name="Longin S."/>
            <person name="Jordens J."/>
            <person name="Stevens I."/>
            <person name="Janssens V."/>
            <person name="Goris J."/>
        </authorList>
    </citation>
    <scope>INTERACTION WITH PPE1 AND RRD2</scope>
</reference>
<reference key="12">
    <citation type="journal article" date="2007" name="J. Proteome Res.">
        <title>Large-scale phosphorylation analysis of alpha-factor-arrested Saccharomyces cerevisiae.</title>
        <authorList>
            <person name="Li X."/>
            <person name="Gerber S.A."/>
            <person name="Rudner A.D."/>
            <person name="Beausoleil S.A."/>
            <person name="Haas W."/>
            <person name="Villen J."/>
            <person name="Elias J.E."/>
            <person name="Gygi S.P."/>
        </authorList>
    </citation>
    <scope>PHOSPHORYLATION [LARGE SCALE ANALYSIS] AT THR-43</scope>
    <scope>IDENTIFICATION BY MASS SPECTROMETRY [LARGE SCALE ANALYSIS]</scope>
    <source>
        <strain>ADR376</strain>
    </source>
</reference>
<reference key="13">
    <citation type="journal article" date="2008" name="Mol. Cell. Proteomics">
        <title>A multidimensional chromatography technology for in-depth phosphoproteome analysis.</title>
        <authorList>
            <person name="Albuquerque C.P."/>
            <person name="Smolka M.B."/>
            <person name="Payne S.H."/>
            <person name="Bafna V."/>
            <person name="Eng J."/>
            <person name="Zhou H."/>
        </authorList>
    </citation>
    <scope>PHOSPHORYLATION [LARGE SCALE ANALYSIS] AT THR-43</scope>
    <scope>IDENTIFICATION BY MASS SPECTROMETRY [LARGE SCALE ANALYSIS]</scope>
</reference>
<reference key="14">
    <citation type="journal article" date="2009" name="Science">
        <title>Global analysis of Cdk1 substrate phosphorylation sites provides insights into evolution.</title>
        <authorList>
            <person name="Holt L.J."/>
            <person name="Tuch B.B."/>
            <person name="Villen J."/>
            <person name="Johnson A.D."/>
            <person name="Gygi S.P."/>
            <person name="Morgan D.O."/>
        </authorList>
    </citation>
    <scope>PHOSPHORYLATION [LARGE SCALE ANALYSIS] AT SER-38 AND THR-43</scope>
    <scope>IDENTIFICATION BY MASS SPECTROMETRY [LARGE SCALE ANALYSIS]</scope>
</reference>
<keyword id="KW-0378">Hydrolase</keyword>
<keyword id="KW-0464">Manganese</keyword>
<keyword id="KW-0479">Metal-binding</keyword>
<keyword id="KW-0488">Methylation</keyword>
<keyword id="KW-0597">Phosphoprotein</keyword>
<keyword id="KW-0904">Protein phosphatase</keyword>
<keyword id="KW-1185">Reference proteome</keyword>